<organism>
    <name type="scientific">Geobacter metallireducens (strain ATCC 53774 / DSM 7210 / GS-15)</name>
    <dbReference type="NCBI Taxonomy" id="269799"/>
    <lineage>
        <taxon>Bacteria</taxon>
        <taxon>Pseudomonadati</taxon>
        <taxon>Thermodesulfobacteriota</taxon>
        <taxon>Desulfuromonadia</taxon>
        <taxon>Geobacterales</taxon>
        <taxon>Geobacteraceae</taxon>
        <taxon>Geobacter</taxon>
    </lineage>
</organism>
<feature type="chain" id="PRO_0000279787" description="Probable potassium transport system protein Kup 2">
    <location>
        <begin position="1"/>
        <end position="606"/>
    </location>
</feature>
<feature type="transmembrane region" description="Helical" evidence="1">
    <location>
        <begin position="18"/>
        <end position="38"/>
    </location>
</feature>
<feature type="transmembrane region" description="Helical" evidence="1">
    <location>
        <begin position="46"/>
        <end position="66"/>
    </location>
</feature>
<feature type="transmembrane region" description="Helical" evidence="1">
    <location>
        <begin position="97"/>
        <end position="117"/>
    </location>
</feature>
<feature type="transmembrane region" description="Helical" evidence="1">
    <location>
        <begin position="140"/>
        <end position="160"/>
    </location>
</feature>
<feature type="transmembrane region" description="Helical" evidence="1">
    <location>
        <begin position="169"/>
        <end position="189"/>
    </location>
</feature>
<feature type="transmembrane region" description="Helical" evidence="1">
    <location>
        <begin position="204"/>
        <end position="224"/>
    </location>
</feature>
<feature type="transmembrane region" description="Helical" evidence="1">
    <location>
        <begin position="247"/>
        <end position="267"/>
    </location>
</feature>
<feature type="transmembrane region" description="Helical" evidence="1">
    <location>
        <begin position="286"/>
        <end position="306"/>
    </location>
</feature>
<feature type="transmembrane region" description="Helical" evidence="1">
    <location>
        <begin position="339"/>
        <end position="359"/>
    </location>
</feature>
<feature type="transmembrane region" description="Helical" evidence="1">
    <location>
        <begin position="368"/>
        <end position="388"/>
    </location>
</feature>
<feature type="transmembrane region" description="Helical" evidence="1">
    <location>
        <begin position="395"/>
        <end position="415"/>
    </location>
</feature>
<feature type="transmembrane region" description="Helical" evidence="1">
    <location>
        <begin position="418"/>
        <end position="438"/>
    </location>
</feature>
<evidence type="ECO:0000255" key="1">
    <source>
        <dbReference type="HAMAP-Rule" id="MF_01522"/>
    </source>
</evidence>
<gene>
    <name evidence="1" type="primary">kup2</name>
    <name type="ordered locus">Gmet_0039</name>
</gene>
<keyword id="KW-0997">Cell inner membrane</keyword>
<keyword id="KW-1003">Cell membrane</keyword>
<keyword id="KW-0406">Ion transport</keyword>
<keyword id="KW-0472">Membrane</keyword>
<keyword id="KW-0630">Potassium</keyword>
<keyword id="KW-0633">Potassium transport</keyword>
<keyword id="KW-1185">Reference proteome</keyword>
<keyword id="KW-0769">Symport</keyword>
<keyword id="KW-0812">Transmembrane</keyword>
<keyword id="KW-1133">Transmembrane helix</keyword>
<keyword id="KW-0813">Transport</keyword>
<sequence>MVQEHTESFWGGIIKSMGLVFGDIGTSPIYTLTVIMTLTKPDAEHVLGILSLIVWTLIILVSVEYAWLAMSLGRKGEGGTIVLKEILVRLLKSGRQVAFVGFLAFMGVSLLLGDGIITPAISILSAVEGMRLIPGWENLAQGVLIFIAAVIALILFIFQFKGTDKVAGAFGPIMVIWFGALTLSGIVSIAGTPEVVSAVSPHHAVTFLMHNGLAGFFILSEVILCATGGEALYADMGHLGRKPIIRAWYFVFSALVINYLGQGAFILRNPNETNILFSMVKSQAPILYIPFLCLTIMATIIASQALISGVFSIVYQGITTRILPLMKVDYTSTHLKSQIYIGSVNWSLLVAVIFIMLIFKKSENLAAAYGLAVTGTMFITGIMMTMIFSHTTKKWKVPIALAVTLIDLVYLTANFHKLPHGGYWSLILASIPLAIMIIWTQGQKALYRALRPLDLDTFLLSFGQIYAKGHNIPGTGLFFVRETAVVPPYVIHCIIRSNIIYERNVFVSLNRSDEPFGVKANLTKGIGPGLDSFEILAGYMELVDIERLLKKKGIEEKVIFYGIEDIATNNPFWRVFSTIKRQTANFVQFNKLPVSKLQGVVTRVEM</sequence>
<comment type="function">
    <text evidence="1">Transport of potassium into the cell. Likely operates as a K(+):H(+) symporter.</text>
</comment>
<comment type="catalytic activity">
    <reaction evidence="1">
        <text>K(+)(in) + H(+)(in) = K(+)(out) + H(+)(out)</text>
        <dbReference type="Rhea" id="RHEA:28490"/>
        <dbReference type="ChEBI" id="CHEBI:15378"/>
        <dbReference type="ChEBI" id="CHEBI:29103"/>
    </reaction>
    <physiologicalReaction direction="right-to-left" evidence="1">
        <dbReference type="Rhea" id="RHEA:28492"/>
    </physiologicalReaction>
</comment>
<comment type="subcellular location">
    <subcellularLocation>
        <location evidence="1">Cell inner membrane</location>
        <topology evidence="1">Multi-pass membrane protein</topology>
    </subcellularLocation>
</comment>
<comment type="similarity">
    <text evidence="1">Belongs to the HAK/KUP transporter (TC 2.A.72) family.</text>
</comment>
<protein>
    <recommendedName>
        <fullName evidence="1">Probable potassium transport system protein Kup 2</fullName>
    </recommendedName>
</protein>
<accession>Q39ZN5</accession>
<reference key="1">
    <citation type="journal article" date="2009" name="BMC Microbiol.">
        <title>The genome sequence of Geobacter metallireducens: features of metabolism, physiology and regulation common and dissimilar to Geobacter sulfurreducens.</title>
        <authorList>
            <person name="Aklujkar M."/>
            <person name="Krushkal J."/>
            <person name="DiBartolo G."/>
            <person name="Lapidus A."/>
            <person name="Land M.L."/>
            <person name="Lovley D.R."/>
        </authorList>
    </citation>
    <scope>NUCLEOTIDE SEQUENCE [LARGE SCALE GENOMIC DNA]</scope>
    <source>
        <strain>ATCC 53774 / DSM 7210 / GS-15</strain>
    </source>
</reference>
<dbReference type="EMBL" id="CP000148">
    <property type="protein sequence ID" value="ABB30289.1"/>
    <property type="molecule type" value="Genomic_DNA"/>
</dbReference>
<dbReference type="RefSeq" id="WP_004513806.1">
    <property type="nucleotide sequence ID" value="NC_007517.1"/>
</dbReference>
<dbReference type="STRING" id="269799.Gmet_0039"/>
<dbReference type="KEGG" id="gme:Gmet_0039"/>
<dbReference type="eggNOG" id="COG3158">
    <property type="taxonomic scope" value="Bacteria"/>
</dbReference>
<dbReference type="HOGENOM" id="CLU_008142_4_2_7"/>
<dbReference type="Proteomes" id="UP000007073">
    <property type="component" value="Chromosome"/>
</dbReference>
<dbReference type="GO" id="GO:0005886">
    <property type="term" value="C:plasma membrane"/>
    <property type="evidence" value="ECO:0007669"/>
    <property type="project" value="UniProtKB-SubCell"/>
</dbReference>
<dbReference type="GO" id="GO:0015079">
    <property type="term" value="F:potassium ion transmembrane transporter activity"/>
    <property type="evidence" value="ECO:0007669"/>
    <property type="project" value="UniProtKB-UniRule"/>
</dbReference>
<dbReference type="GO" id="GO:0015293">
    <property type="term" value="F:symporter activity"/>
    <property type="evidence" value="ECO:0007669"/>
    <property type="project" value="UniProtKB-UniRule"/>
</dbReference>
<dbReference type="HAMAP" id="MF_01522">
    <property type="entry name" value="Kup"/>
    <property type="match status" value="1"/>
</dbReference>
<dbReference type="InterPro" id="IPR003855">
    <property type="entry name" value="K+_transporter"/>
</dbReference>
<dbReference type="InterPro" id="IPR053952">
    <property type="entry name" value="K_trans_C"/>
</dbReference>
<dbReference type="InterPro" id="IPR053951">
    <property type="entry name" value="K_trans_N"/>
</dbReference>
<dbReference type="InterPro" id="IPR023051">
    <property type="entry name" value="Kup"/>
</dbReference>
<dbReference type="PANTHER" id="PTHR30540:SF83">
    <property type="entry name" value="K+ POTASSIUM TRANSPORTER"/>
    <property type="match status" value="1"/>
</dbReference>
<dbReference type="PANTHER" id="PTHR30540">
    <property type="entry name" value="OSMOTIC STRESS POTASSIUM TRANSPORTER"/>
    <property type="match status" value="1"/>
</dbReference>
<dbReference type="Pfam" id="PF02705">
    <property type="entry name" value="K_trans"/>
    <property type="match status" value="1"/>
</dbReference>
<dbReference type="Pfam" id="PF22776">
    <property type="entry name" value="K_trans_C"/>
    <property type="match status" value="1"/>
</dbReference>
<proteinExistence type="inferred from homology"/>
<name>KUP2_GEOMG</name>